<organism>
    <name type="scientific">Acinetobacter baylyi (strain ATCC 33305 / BD413 / ADP1)</name>
    <dbReference type="NCBI Taxonomy" id="62977"/>
    <lineage>
        <taxon>Bacteria</taxon>
        <taxon>Pseudomonadati</taxon>
        <taxon>Pseudomonadota</taxon>
        <taxon>Gammaproteobacteria</taxon>
        <taxon>Moraxellales</taxon>
        <taxon>Moraxellaceae</taxon>
        <taxon>Acinetobacter</taxon>
    </lineage>
</organism>
<dbReference type="EC" id="3.4.21.92" evidence="1"/>
<dbReference type="EMBL" id="CR543861">
    <property type="protein sequence ID" value="CAG67460.1"/>
    <property type="molecule type" value="Genomic_DNA"/>
</dbReference>
<dbReference type="RefSeq" id="WP_004920069.1">
    <property type="nucleotide sequence ID" value="NC_005966.1"/>
</dbReference>
<dbReference type="SMR" id="Q6FEP8"/>
<dbReference type="STRING" id="202950.GCA_001485005_00772"/>
<dbReference type="MEROPS" id="S14.001"/>
<dbReference type="GeneID" id="45233013"/>
<dbReference type="KEGG" id="aci:ACIAD0534"/>
<dbReference type="eggNOG" id="COG0740">
    <property type="taxonomic scope" value="Bacteria"/>
</dbReference>
<dbReference type="HOGENOM" id="CLU_058707_3_2_6"/>
<dbReference type="OrthoDB" id="9802800at2"/>
<dbReference type="BioCyc" id="ASP62977:ACIAD_RS02425-MONOMER"/>
<dbReference type="Proteomes" id="UP000000430">
    <property type="component" value="Chromosome"/>
</dbReference>
<dbReference type="GO" id="GO:0005737">
    <property type="term" value="C:cytoplasm"/>
    <property type="evidence" value="ECO:0007669"/>
    <property type="project" value="UniProtKB-SubCell"/>
</dbReference>
<dbReference type="GO" id="GO:0009368">
    <property type="term" value="C:endopeptidase Clp complex"/>
    <property type="evidence" value="ECO:0007669"/>
    <property type="project" value="TreeGrafter"/>
</dbReference>
<dbReference type="GO" id="GO:0004176">
    <property type="term" value="F:ATP-dependent peptidase activity"/>
    <property type="evidence" value="ECO:0007669"/>
    <property type="project" value="InterPro"/>
</dbReference>
<dbReference type="GO" id="GO:0051117">
    <property type="term" value="F:ATPase binding"/>
    <property type="evidence" value="ECO:0007669"/>
    <property type="project" value="TreeGrafter"/>
</dbReference>
<dbReference type="GO" id="GO:0004252">
    <property type="term" value="F:serine-type endopeptidase activity"/>
    <property type="evidence" value="ECO:0007669"/>
    <property type="project" value="UniProtKB-UniRule"/>
</dbReference>
<dbReference type="GO" id="GO:0006515">
    <property type="term" value="P:protein quality control for misfolded or incompletely synthesized proteins"/>
    <property type="evidence" value="ECO:0007669"/>
    <property type="project" value="TreeGrafter"/>
</dbReference>
<dbReference type="CDD" id="cd07017">
    <property type="entry name" value="S14_ClpP_2"/>
    <property type="match status" value="1"/>
</dbReference>
<dbReference type="FunFam" id="3.90.226.10:FF:000001">
    <property type="entry name" value="ATP-dependent Clp protease proteolytic subunit"/>
    <property type="match status" value="1"/>
</dbReference>
<dbReference type="Gene3D" id="3.90.226.10">
    <property type="entry name" value="2-enoyl-CoA Hydratase, Chain A, domain 1"/>
    <property type="match status" value="1"/>
</dbReference>
<dbReference type="HAMAP" id="MF_00444">
    <property type="entry name" value="ClpP"/>
    <property type="match status" value="1"/>
</dbReference>
<dbReference type="InterPro" id="IPR001907">
    <property type="entry name" value="ClpP"/>
</dbReference>
<dbReference type="InterPro" id="IPR029045">
    <property type="entry name" value="ClpP/crotonase-like_dom_sf"/>
</dbReference>
<dbReference type="InterPro" id="IPR023562">
    <property type="entry name" value="ClpP/TepA"/>
</dbReference>
<dbReference type="InterPro" id="IPR033135">
    <property type="entry name" value="ClpP_His_AS"/>
</dbReference>
<dbReference type="InterPro" id="IPR018215">
    <property type="entry name" value="ClpP_Ser_AS"/>
</dbReference>
<dbReference type="NCBIfam" id="TIGR00493">
    <property type="entry name" value="clpP"/>
    <property type="match status" value="1"/>
</dbReference>
<dbReference type="NCBIfam" id="NF001368">
    <property type="entry name" value="PRK00277.1"/>
    <property type="match status" value="1"/>
</dbReference>
<dbReference type="NCBIfam" id="NF009205">
    <property type="entry name" value="PRK12553.1"/>
    <property type="match status" value="1"/>
</dbReference>
<dbReference type="PANTHER" id="PTHR10381">
    <property type="entry name" value="ATP-DEPENDENT CLP PROTEASE PROTEOLYTIC SUBUNIT"/>
    <property type="match status" value="1"/>
</dbReference>
<dbReference type="PANTHER" id="PTHR10381:SF70">
    <property type="entry name" value="ATP-DEPENDENT CLP PROTEASE PROTEOLYTIC SUBUNIT"/>
    <property type="match status" value="1"/>
</dbReference>
<dbReference type="Pfam" id="PF00574">
    <property type="entry name" value="CLP_protease"/>
    <property type="match status" value="1"/>
</dbReference>
<dbReference type="PRINTS" id="PR00127">
    <property type="entry name" value="CLPPROTEASEP"/>
</dbReference>
<dbReference type="SUPFAM" id="SSF52096">
    <property type="entry name" value="ClpP/crotonase"/>
    <property type="match status" value="1"/>
</dbReference>
<dbReference type="PROSITE" id="PS00382">
    <property type="entry name" value="CLP_PROTEASE_HIS"/>
    <property type="match status" value="1"/>
</dbReference>
<dbReference type="PROSITE" id="PS00381">
    <property type="entry name" value="CLP_PROTEASE_SER"/>
    <property type="match status" value="1"/>
</dbReference>
<keyword id="KW-0963">Cytoplasm</keyword>
<keyword id="KW-0378">Hydrolase</keyword>
<keyword id="KW-0645">Protease</keyword>
<keyword id="KW-0720">Serine protease</keyword>
<comment type="function">
    <text evidence="1">Cleaves peptides in various proteins in a process that requires ATP hydrolysis. Has a chymotrypsin-like activity. Plays a major role in the degradation of misfolded proteins.</text>
</comment>
<comment type="catalytic activity">
    <reaction evidence="1">
        <text>Hydrolysis of proteins to small peptides in the presence of ATP and magnesium. alpha-casein is the usual test substrate. In the absence of ATP, only oligopeptides shorter than five residues are hydrolyzed (such as succinyl-Leu-Tyr-|-NHMec, and Leu-Tyr-Leu-|-Tyr-Trp, in which cleavage of the -Tyr-|-Leu- and -Tyr-|-Trp bonds also occurs).</text>
        <dbReference type="EC" id="3.4.21.92"/>
    </reaction>
</comment>
<comment type="subunit">
    <text evidence="1">Fourteen ClpP subunits assemble into 2 heptameric rings which stack back to back to give a disk-like structure with a central cavity, resembling the structure of eukaryotic proteasomes.</text>
</comment>
<comment type="subcellular location">
    <subcellularLocation>
        <location evidence="1">Cytoplasm</location>
    </subcellularLocation>
</comment>
<comment type="similarity">
    <text evidence="1">Belongs to the peptidase S14 family.</text>
</comment>
<evidence type="ECO:0000255" key="1">
    <source>
        <dbReference type="HAMAP-Rule" id="MF_00444"/>
    </source>
</evidence>
<gene>
    <name evidence="1" type="primary">clpP</name>
    <name type="ordered locus">ACIAD0534</name>
</gene>
<reference key="1">
    <citation type="journal article" date="2004" name="Nucleic Acids Res.">
        <title>Unique features revealed by the genome sequence of Acinetobacter sp. ADP1, a versatile and naturally transformation competent bacterium.</title>
        <authorList>
            <person name="Barbe V."/>
            <person name="Vallenet D."/>
            <person name="Fonknechten N."/>
            <person name="Kreimeyer A."/>
            <person name="Oztas S."/>
            <person name="Labarre L."/>
            <person name="Cruveiller S."/>
            <person name="Robert C."/>
            <person name="Duprat S."/>
            <person name="Wincker P."/>
            <person name="Ornston L.N."/>
            <person name="Weissenbach J."/>
            <person name="Marliere P."/>
            <person name="Cohen G.N."/>
            <person name="Medigue C."/>
        </authorList>
    </citation>
    <scope>NUCLEOTIDE SEQUENCE [LARGE SCALE GENOMIC DNA]</scope>
    <source>
        <strain>ATCC 33305 / BD413 / ADP1</strain>
    </source>
</reference>
<protein>
    <recommendedName>
        <fullName evidence="1">ATP-dependent Clp protease proteolytic subunit</fullName>
        <ecNumber evidence="1">3.4.21.92</ecNumber>
    </recommendedName>
    <alternativeName>
        <fullName evidence="1">Endopeptidase Clp</fullName>
    </alternativeName>
</protein>
<feature type="chain" id="PRO_0000179473" description="ATP-dependent Clp protease proteolytic subunit">
    <location>
        <begin position="1"/>
        <end position="201"/>
    </location>
</feature>
<feature type="active site" description="Nucleophile" evidence="1">
    <location>
        <position position="105"/>
    </location>
</feature>
<feature type="active site" evidence="1">
    <location>
        <position position="130"/>
    </location>
</feature>
<name>CLPP_ACIAD</name>
<sequence>MYVPTIENALVPVVVEQSSRGERSFDIFSRLLRERVIFLTGEVEDNMANLIVAQMLFLEAENPDKDIHLYINSPGGSVTAGMAIYDTMQFIKPDVVTYCMGQAASMGAFLLNAGAKGKRYCLENARVMIHQPLGGFRGQASDIEIHAREILFIKERLNRLMAEHSGQDYERVARDTDRDNFMTAQAAKEYGLVDEVLSKRP</sequence>
<proteinExistence type="inferred from homology"/>
<accession>Q6FEP8</accession>